<gene>
    <name evidence="1" type="primary">ligA</name>
    <name type="ordered locus">Lreu_1444</name>
</gene>
<comment type="function">
    <text evidence="1">DNA ligase that catalyzes the formation of phosphodiester linkages between 5'-phosphoryl and 3'-hydroxyl groups in double-stranded DNA using NAD as a coenzyme and as the energy source for the reaction. It is essential for DNA replication and repair of damaged DNA.</text>
</comment>
<comment type="catalytic activity">
    <reaction evidence="1">
        <text>NAD(+) + (deoxyribonucleotide)n-3'-hydroxyl + 5'-phospho-(deoxyribonucleotide)m = (deoxyribonucleotide)n+m + AMP + beta-nicotinamide D-nucleotide.</text>
        <dbReference type="EC" id="6.5.1.2"/>
    </reaction>
</comment>
<comment type="cofactor">
    <cofactor evidence="1">
        <name>Mg(2+)</name>
        <dbReference type="ChEBI" id="CHEBI:18420"/>
    </cofactor>
    <cofactor evidence="1">
        <name>Mn(2+)</name>
        <dbReference type="ChEBI" id="CHEBI:29035"/>
    </cofactor>
</comment>
<comment type="similarity">
    <text evidence="1">Belongs to the NAD-dependent DNA ligase family. LigA subfamily.</text>
</comment>
<keyword id="KW-0227">DNA damage</keyword>
<keyword id="KW-0234">DNA repair</keyword>
<keyword id="KW-0235">DNA replication</keyword>
<keyword id="KW-0436">Ligase</keyword>
<keyword id="KW-0460">Magnesium</keyword>
<keyword id="KW-0464">Manganese</keyword>
<keyword id="KW-0479">Metal-binding</keyword>
<keyword id="KW-0520">NAD</keyword>
<keyword id="KW-1185">Reference proteome</keyword>
<keyword id="KW-0862">Zinc</keyword>
<evidence type="ECO:0000255" key="1">
    <source>
        <dbReference type="HAMAP-Rule" id="MF_01588"/>
    </source>
</evidence>
<accession>A5VLG6</accession>
<reference key="1">
    <citation type="journal article" date="2011" name="PLoS Genet.">
        <title>The evolution of host specialization in the vertebrate gut symbiont Lactobacillus reuteri.</title>
        <authorList>
            <person name="Frese S.A."/>
            <person name="Benson A.K."/>
            <person name="Tannock G.W."/>
            <person name="Loach D.M."/>
            <person name="Kim J."/>
            <person name="Zhang M."/>
            <person name="Oh P.L."/>
            <person name="Heng N.C."/>
            <person name="Patil P.B."/>
            <person name="Juge N."/>
            <person name="Mackenzie D.A."/>
            <person name="Pearson B.M."/>
            <person name="Lapidus A."/>
            <person name="Dalin E."/>
            <person name="Tice H."/>
            <person name="Goltsman E."/>
            <person name="Land M."/>
            <person name="Hauser L."/>
            <person name="Ivanova N."/>
            <person name="Kyrpides N.C."/>
            <person name="Walter J."/>
        </authorList>
    </citation>
    <scope>NUCLEOTIDE SEQUENCE [LARGE SCALE GENOMIC DNA]</scope>
    <source>
        <strain>DSM 20016</strain>
    </source>
</reference>
<organism>
    <name type="scientific">Limosilactobacillus reuteri (strain DSM 20016)</name>
    <name type="common">Lactobacillus reuteri</name>
    <dbReference type="NCBI Taxonomy" id="557436"/>
    <lineage>
        <taxon>Bacteria</taxon>
        <taxon>Bacillati</taxon>
        <taxon>Bacillota</taxon>
        <taxon>Bacilli</taxon>
        <taxon>Lactobacillales</taxon>
        <taxon>Lactobacillaceae</taxon>
        <taxon>Limosilactobacillus</taxon>
    </lineage>
</organism>
<sequence length="680" mass="76003">MSEKQTPVKELTLQEAQDEIKPLRAKLTKWGKEYYEQDNPTVEDHVYDRAYQRLVQLEEQFPQLVSADSPTQRVGGATESQLTKVRHEIPMLSMGDVFSIEELMDFNQRQQENRDVEVEPEYNLELKIDGLSLSLVYENGKLVQGSTRGNGTIGEDVTANVRTIKSVPAELPEPLSIEVRGECYMPKAAFAKLNAKREAEGLPVFANPRNAAAGSLRQLDPKVTAQRELDTFMYYVPEYQKIGVKTQAEALDRMRELGFNVNPNNRVVHNRDEIEKYIEEYTAQRDKLTYGIDGIVEKVNDLDTEVALGNTVKVPRWEIAYKFPPEEQATIVRDIVWTVGRTGNVTPTAVMDPVQLAGTTVSRASLHNPDYLREKDIRIGDTVYLHKAGDIIPEISKVDLTKRPADSVEYEIPTKCPVCGSELVHLDGEVALRCINPMCPAQIKEGLAHFASRNAMNIDGLGPRIIEQLWDKELIHDVAGLYRLNHDQLLTLDKFGEKSTANLLTSIDNSRNNSVERLLFGLGIRHVGAKAARIIMEHFGDLDSLMKADADEISAISGIGPTIGESIVTYFANQQVVKLIDELREVGVNFAYLGSRSNANPDSEWNGRRVVLTGKLTEMTRGEAKSWLENHGAKVTESVSKKTDIVIAGADAGSKLTKAQNLGIDVWNEQQFSQAMKEEQ</sequence>
<protein>
    <recommendedName>
        <fullName evidence="1">DNA ligase</fullName>
        <ecNumber evidence="1">6.5.1.2</ecNumber>
    </recommendedName>
    <alternativeName>
        <fullName evidence="1">Polydeoxyribonucleotide synthase [NAD(+)]</fullName>
    </alternativeName>
</protein>
<dbReference type="EC" id="6.5.1.2" evidence="1"/>
<dbReference type="EMBL" id="CP000705">
    <property type="protein sequence ID" value="ABQ83690.1"/>
    <property type="molecule type" value="Genomic_DNA"/>
</dbReference>
<dbReference type="RefSeq" id="WP_003668761.1">
    <property type="nucleotide sequence ID" value="NC_009513.1"/>
</dbReference>
<dbReference type="SMR" id="A5VLG6"/>
<dbReference type="STRING" id="557436.Lreu_1444"/>
<dbReference type="KEGG" id="lre:Lreu_1444"/>
<dbReference type="eggNOG" id="COG0272">
    <property type="taxonomic scope" value="Bacteria"/>
</dbReference>
<dbReference type="HOGENOM" id="CLU_007764_2_1_9"/>
<dbReference type="Proteomes" id="UP000001991">
    <property type="component" value="Chromosome"/>
</dbReference>
<dbReference type="GO" id="GO:0005829">
    <property type="term" value="C:cytosol"/>
    <property type="evidence" value="ECO:0007669"/>
    <property type="project" value="TreeGrafter"/>
</dbReference>
<dbReference type="GO" id="GO:0003911">
    <property type="term" value="F:DNA ligase (NAD+) activity"/>
    <property type="evidence" value="ECO:0007669"/>
    <property type="project" value="UniProtKB-UniRule"/>
</dbReference>
<dbReference type="GO" id="GO:0046872">
    <property type="term" value="F:metal ion binding"/>
    <property type="evidence" value="ECO:0007669"/>
    <property type="project" value="UniProtKB-KW"/>
</dbReference>
<dbReference type="GO" id="GO:0006281">
    <property type="term" value="P:DNA repair"/>
    <property type="evidence" value="ECO:0007669"/>
    <property type="project" value="UniProtKB-KW"/>
</dbReference>
<dbReference type="GO" id="GO:0006260">
    <property type="term" value="P:DNA replication"/>
    <property type="evidence" value="ECO:0007669"/>
    <property type="project" value="UniProtKB-KW"/>
</dbReference>
<dbReference type="CDD" id="cd17748">
    <property type="entry name" value="BRCT_DNA_ligase_like"/>
    <property type="match status" value="1"/>
</dbReference>
<dbReference type="CDD" id="cd00114">
    <property type="entry name" value="LIGANc"/>
    <property type="match status" value="1"/>
</dbReference>
<dbReference type="FunFam" id="1.10.150.20:FF:000006">
    <property type="entry name" value="DNA ligase"/>
    <property type="match status" value="1"/>
</dbReference>
<dbReference type="FunFam" id="1.10.150.20:FF:000007">
    <property type="entry name" value="DNA ligase"/>
    <property type="match status" value="1"/>
</dbReference>
<dbReference type="FunFam" id="2.40.50.140:FF:000012">
    <property type="entry name" value="DNA ligase"/>
    <property type="match status" value="1"/>
</dbReference>
<dbReference type="FunFam" id="3.30.470.30:FF:000001">
    <property type="entry name" value="DNA ligase"/>
    <property type="match status" value="1"/>
</dbReference>
<dbReference type="Gene3D" id="6.20.10.30">
    <property type="match status" value="1"/>
</dbReference>
<dbReference type="Gene3D" id="1.10.150.20">
    <property type="entry name" value="5' to 3' exonuclease, C-terminal subdomain"/>
    <property type="match status" value="2"/>
</dbReference>
<dbReference type="Gene3D" id="3.40.50.10190">
    <property type="entry name" value="BRCT domain"/>
    <property type="match status" value="1"/>
</dbReference>
<dbReference type="Gene3D" id="3.30.470.30">
    <property type="entry name" value="DNA ligase/mRNA capping enzyme"/>
    <property type="match status" value="1"/>
</dbReference>
<dbReference type="Gene3D" id="1.10.287.610">
    <property type="entry name" value="Helix hairpin bin"/>
    <property type="match status" value="1"/>
</dbReference>
<dbReference type="Gene3D" id="2.40.50.140">
    <property type="entry name" value="Nucleic acid-binding proteins"/>
    <property type="match status" value="1"/>
</dbReference>
<dbReference type="HAMAP" id="MF_01588">
    <property type="entry name" value="DNA_ligase_A"/>
    <property type="match status" value="1"/>
</dbReference>
<dbReference type="InterPro" id="IPR001357">
    <property type="entry name" value="BRCT_dom"/>
</dbReference>
<dbReference type="InterPro" id="IPR036420">
    <property type="entry name" value="BRCT_dom_sf"/>
</dbReference>
<dbReference type="InterPro" id="IPR041663">
    <property type="entry name" value="DisA/LigA_HHH"/>
</dbReference>
<dbReference type="InterPro" id="IPR001679">
    <property type="entry name" value="DNA_ligase"/>
</dbReference>
<dbReference type="InterPro" id="IPR018239">
    <property type="entry name" value="DNA_ligase_AS"/>
</dbReference>
<dbReference type="InterPro" id="IPR033136">
    <property type="entry name" value="DNA_ligase_CS"/>
</dbReference>
<dbReference type="InterPro" id="IPR013839">
    <property type="entry name" value="DNAligase_adenylation"/>
</dbReference>
<dbReference type="InterPro" id="IPR013840">
    <property type="entry name" value="DNAligase_N"/>
</dbReference>
<dbReference type="InterPro" id="IPR012340">
    <property type="entry name" value="NA-bd_OB-fold"/>
</dbReference>
<dbReference type="InterPro" id="IPR004150">
    <property type="entry name" value="NAD_DNA_ligase_OB"/>
</dbReference>
<dbReference type="InterPro" id="IPR010994">
    <property type="entry name" value="RuvA_2-like"/>
</dbReference>
<dbReference type="InterPro" id="IPR004149">
    <property type="entry name" value="Znf_DNAligase_C4"/>
</dbReference>
<dbReference type="NCBIfam" id="TIGR00575">
    <property type="entry name" value="dnlj"/>
    <property type="match status" value="1"/>
</dbReference>
<dbReference type="NCBIfam" id="NF005932">
    <property type="entry name" value="PRK07956.1"/>
    <property type="match status" value="1"/>
</dbReference>
<dbReference type="PANTHER" id="PTHR23389">
    <property type="entry name" value="CHROMOSOME TRANSMISSION FIDELITY FACTOR 18"/>
    <property type="match status" value="1"/>
</dbReference>
<dbReference type="PANTHER" id="PTHR23389:SF9">
    <property type="entry name" value="DNA LIGASE"/>
    <property type="match status" value="1"/>
</dbReference>
<dbReference type="Pfam" id="PF00533">
    <property type="entry name" value="BRCT"/>
    <property type="match status" value="1"/>
</dbReference>
<dbReference type="Pfam" id="PF01653">
    <property type="entry name" value="DNA_ligase_aden"/>
    <property type="match status" value="1"/>
</dbReference>
<dbReference type="Pfam" id="PF03120">
    <property type="entry name" value="DNA_ligase_OB"/>
    <property type="match status" value="1"/>
</dbReference>
<dbReference type="Pfam" id="PF03119">
    <property type="entry name" value="DNA_ligase_ZBD"/>
    <property type="match status" value="1"/>
</dbReference>
<dbReference type="Pfam" id="PF12826">
    <property type="entry name" value="HHH_2"/>
    <property type="match status" value="1"/>
</dbReference>
<dbReference type="PIRSF" id="PIRSF001604">
    <property type="entry name" value="LigA"/>
    <property type="match status" value="1"/>
</dbReference>
<dbReference type="SMART" id="SM00292">
    <property type="entry name" value="BRCT"/>
    <property type="match status" value="1"/>
</dbReference>
<dbReference type="SMART" id="SM00532">
    <property type="entry name" value="LIGANc"/>
    <property type="match status" value="1"/>
</dbReference>
<dbReference type="SUPFAM" id="SSF52113">
    <property type="entry name" value="BRCT domain"/>
    <property type="match status" value="1"/>
</dbReference>
<dbReference type="SUPFAM" id="SSF56091">
    <property type="entry name" value="DNA ligase/mRNA capping enzyme, catalytic domain"/>
    <property type="match status" value="1"/>
</dbReference>
<dbReference type="SUPFAM" id="SSF50249">
    <property type="entry name" value="Nucleic acid-binding proteins"/>
    <property type="match status" value="1"/>
</dbReference>
<dbReference type="SUPFAM" id="SSF47781">
    <property type="entry name" value="RuvA domain 2-like"/>
    <property type="match status" value="1"/>
</dbReference>
<dbReference type="PROSITE" id="PS50172">
    <property type="entry name" value="BRCT"/>
    <property type="match status" value="1"/>
</dbReference>
<dbReference type="PROSITE" id="PS01055">
    <property type="entry name" value="DNA_LIGASE_N1"/>
    <property type="match status" value="1"/>
</dbReference>
<dbReference type="PROSITE" id="PS01056">
    <property type="entry name" value="DNA_LIGASE_N2"/>
    <property type="match status" value="1"/>
</dbReference>
<name>DNLJ_LIMRD</name>
<proteinExistence type="inferred from homology"/>
<feature type="chain" id="PRO_0000340357" description="DNA ligase">
    <location>
        <begin position="1"/>
        <end position="680"/>
    </location>
</feature>
<feature type="domain" description="BRCT" evidence="1">
    <location>
        <begin position="600"/>
        <end position="680"/>
    </location>
</feature>
<feature type="active site" description="N6-AMP-lysine intermediate" evidence="1">
    <location>
        <position position="127"/>
    </location>
</feature>
<feature type="binding site" evidence="1">
    <location>
        <begin position="44"/>
        <end position="48"/>
    </location>
    <ligand>
        <name>NAD(+)</name>
        <dbReference type="ChEBI" id="CHEBI:57540"/>
    </ligand>
</feature>
<feature type="binding site" evidence="1">
    <location>
        <begin position="93"/>
        <end position="94"/>
    </location>
    <ligand>
        <name>NAD(+)</name>
        <dbReference type="ChEBI" id="CHEBI:57540"/>
    </ligand>
</feature>
<feature type="binding site" evidence="1">
    <location>
        <position position="125"/>
    </location>
    <ligand>
        <name>NAD(+)</name>
        <dbReference type="ChEBI" id="CHEBI:57540"/>
    </ligand>
</feature>
<feature type="binding site" evidence="1">
    <location>
        <position position="148"/>
    </location>
    <ligand>
        <name>NAD(+)</name>
        <dbReference type="ChEBI" id="CHEBI:57540"/>
    </ligand>
</feature>
<feature type="binding site" evidence="1">
    <location>
        <position position="182"/>
    </location>
    <ligand>
        <name>NAD(+)</name>
        <dbReference type="ChEBI" id="CHEBI:57540"/>
    </ligand>
</feature>
<feature type="binding site" evidence="1">
    <location>
        <position position="298"/>
    </location>
    <ligand>
        <name>NAD(+)</name>
        <dbReference type="ChEBI" id="CHEBI:57540"/>
    </ligand>
</feature>
<feature type="binding site" evidence="1">
    <location>
        <position position="322"/>
    </location>
    <ligand>
        <name>NAD(+)</name>
        <dbReference type="ChEBI" id="CHEBI:57540"/>
    </ligand>
</feature>
<feature type="binding site" evidence="1">
    <location>
        <position position="416"/>
    </location>
    <ligand>
        <name>Zn(2+)</name>
        <dbReference type="ChEBI" id="CHEBI:29105"/>
    </ligand>
</feature>
<feature type="binding site" evidence="1">
    <location>
        <position position="419"/>
    </location>
    <ligand>
        <name>Zn(2+)</name>
        <dbReference type="ChEBI" id="CHEBI:29105"/>
    </ligand>
</feature>
<feature type="binding site" evidence="1">
    <location>
        <position position="434"/>
    </location>
    <ligand>
        <name>Zn(2+)</name>
        <dbReference type="ChEBI" id="CHEBI:29105"/>
    </ligand>
</feature>
<feature type="binding site" evidence="1">
    <location>
        <position position="439"/>
    </location>
    <ligand>
        <name>Zn(2+)</name>
        <dbReference type="ChEBI" id="CHEBI:29105"/>
    </ligand>
</feature>